<accession>Q5FWL4</accession>
<comment type="function">
    <text evidence="1">Tethers the endoplasmic reticulum to the cell membrane and promotes the formation of appositions between the endoplasmic reticulum and the cell membrane. Binds glycerophospholipids in a barrel-like domain and may play a role in cellular lipid transport (By similarity). Plays a role in the rapid internalization of fgfr1 that has been activated by fgf1 binding; this occurs most likely via the AP-2 complex. Required for normal fgf signaling and the activation of downstream signaling cascades via its role in the internalization of activated fgfr1. Required for normal embryonic development via its role in fgf signaling and the downstream regulation of t/xBRA expression (By similarity).</text>
</comment>
<comment type="subunit">
    <text evidence="1">Interacts with fgfr1 that has been activated by fgf1 binding. Interacts (via C2 domains) with the AP-2 complex (via an alpha subunit). Identified in a complex with the AP-2 complex and fgfr1 (By similarity).</text>
</comment>
<comment type="subcellular location">
    <subcellularLocation>
        <location evidence="3">Cell membrane</location>
        <topology evidence="3">Peripheral membrane protein</topology>
    </subcellularLocation>
    <subcellularLocation>
        <location evidence="2">Endoplasmic reticulum membrane</location>
        <topology evidence="4">Multi-pass membrane protein</topology>
    </subcellularLocation>
    <text evidence="2">Localizes to endoplasmic reticulum-plasma membrane contact sites (EPCS). Recruited to the cell membrane via the third C2 domain (By similarity).</text>
</comment>
<comment type="domain">
    <text evidence="1">Anchored to the endoplasmic reticulum membrane by a transmembrane hairpin structure; both N-terminus and C-terminus are cytoplasmic.</text>
</comment>
<comment type="domain">
    <text evidence="1">The C2 domains mediate lipid and calcium binding. The N-terminal C2 domain binds calcium ions and is important for calcium-dependent lipid binding and interaction with membranes. Two calcium ions are bound at a high-affinity site and a third calcium ion is bound with lower affinity. May bind up to four calcium ions. In contrast, the second C2 domain apparently does not bind calcium. The third C2 domain mediates interaction with membranes enriched in phosphatidylinositol 4,5-bisphosphate and is required for location at the cell membrane (By similarity).</text>
</comment>
<comment type="domain">
    <text evidence="2">The SMP-LTD domain is a barrel-like domain that binds glycerophospholipids in its interior; can bind two lipid molecules simultaneously. Binds a variety of lipids, including phosphatidylethanolamine, phosphatidylcholine and phosphatidylinositol (By similarity).</text>
</comment>
<comment type="similarity">
    <text evidence="8">Belongs to the extended synaptotagmin family.</text>
</comment>
<name>EST2A_XENLA</name>
<protein>
    <recommendedName>
        <fullName>Extended synaptotagmin-2-A</fullName>
        <shortName>E-Syt2-A</shortName>
    </recommendedName>
</protein>
<sequence>MSSESSAEKGPPPSPAENVQPGVPPAAEEPGMISVDIAGLFYQFSKTFILIFPVYVLGYFGLSFSWLLIALVLLLWWRRNKGNKNSRLYRALAFLENEEKSVKHHIASTDLPAWVHFPDIERAEWLNKTVKHMWPYICQFIEKLFRETIEPAVRGANAHLSTFNFTKIDMGSQPLRINGVKVYTENVDKRQIILDLQISFVGETEIDLEVKRYFCRAGVKSIQLHGTMRVILEPLIGDVPIVGALSIFFLRKPLLEINWTGLTNMLDMPGLNGLSDTIILDIISNYLVLPNRITVPLVSDVQIAQLRFPIPKGVLRIHFLEAQDLMWKDTYMKGLVKGKSDPYGVVRLGNQVFQSKVIKENLNPKWNEVYEALVHEHPGQELEIELFDEDTDKDDFLGSLLIDLVEVEKERVVDEWFSLDEATSGKLHLKLEWLTPNSTTDNLDQVLKSIKADKDQANDGLSSALLILYLDSARSLPNNPLEINHDGMKKAAVEKAKKAGKKIGSSPNPYVLFSVGHAVQESKVKYKTAEPLWEQTFTFFVHNPKRQDLEVEVKDENHQSSMGNLKIPLSQILASEDLTMNQRFHLNNSGPNTSLKMKIALRILHVDKPVRSPDEQHTSQVKRPSIFKGKQPPTPQMPSPSPAVAHKPPPTPKLETNKKPENGNKGTPPSASPKSPTELHQSSSSLSGSSFTYSPSHLPAKEPTPSIASDISLPVATQELRERLRQLQNGTTLGQSPLGQIQLTIRHSSQRNKLMVVVHSCRNLIAFSETGSDPYVRIYLLPDKRRSGRRKTHVYKKTLNPIYDQTFEFSVSLPELQRRTLDIAVKHSGGFLSRDKGLLGKLLLELNTEDAAKGWTQWYDLTEDGTRPAVSS</sequence>
<gene>
    <name type="primary">esyt2-a</name>
    <name type="synonym">fam62b-a</name>
</gene>
<reference key="1">
    <citation type="submission" date="2005-01" db="EMBL/GenBank/DDBJ databases">
        <authorList>
            <consortium name="NIH - Xenopus Gene Collection (XGC) project"/>
        </authorList>
    </citation>
    <scope>NUCLEOTIDE SEQUENCE [LARGE SCALE MRNA]</scope>
    <source>
        <tissue>Egg</tissue>
    </source>
</reference>
<feature type="chain" id="PRO_0000278260" description="Extended synaptotagmin-2-A">
    <location>
        <begin position="1"/>
        <end position="872"/>
    </location>
</feature>
<feature type="topological domain" description="Cytoplasmic" evidence="4">
    <location>
        <begin position="1"/>
        <end position="31"/>
    </location>
</feature>
<feature type="transmembrane region" description="Helical" evidence="4">
    <location>
        <begin position="32"/>
        <end position="52"/>
    </location>
</feature>
<feature type="topological domain" description="Lumenal" evidence="4">
    <location>
        <begin position="53"/>
        <end position="55"/>
    </location>
</feature>
<feature type="transmembrane region" description="Helical" evidence="4">
    <location>
        <begin position="56"/>
        <end position="76"/>
    </location>
</feature>
<feature type="topological domain" description="Cytoplasmic" evidence="4">
    <location>
        <begin position="77"/>
        <end position="872"/>
    </location>
</feature>
<feature type="domain" description="SMP-LTD" evidence="6">
    <location>
        <begin position="119"/>
        <end position="298"/>
    </location>
</feature>
<feature type="domain" description="C2 1" evidence="5">
    <location>
        <begin position="297"/>
        <end position="417"/>
    </location>
</feature>
<feature type="domain" description="C2 2" evidence="5">
    <location>
        <begin position="442"/>
        <end position="588"/>
    </location>
</feature>
<feature type="domain" description="C2 3" evidence="5">
    <location>
        <begin position="737"/>
        <end position="859"/>
    </location>
</feature>
<feature type="region of interest" description="Disordered" evidence="7">
    <location>
        <begin position="1"/>
        <end position="25"/>
    </location>
</feature>
<feature type="region of interest" description="Disordered" evidence="7">
    <location>
        <begin position="608"/>
        <end position="711"/>
    </location>
</feature>
<feature type="region of interest" description="Required for phosphatidylinositol 4,5-bisphosphate-dependent location at the cell membrane" evidence="1">
    <location>
        <begin position="784"/>
        <end position="791"/>
    </location>
</feature>
<feature type="compositionally biased region" description="Basic and acidic residues" evidence="7">
    <location>
        <begin position="608"/>
        <end position="617"/>
    </location>
</feature>
<feature type="compositionally biased region" description="Pro residues" evidence="7">
    <location>
        <begin position="632"/>
        <end position="652"/>
    </location>
</feature>
<feature type="compositionally biased region" description="Polar residues" evidence="7">
    <location>
        <begin position="664"/>
        <end position="681"/>
    </location>
</feature>
<feature type="compositionally biased region" description="Low complexity" evidence="7">
    <location>
        <begin position="682"/>
        <end position="696"/>
    </location>
</feature>
<feature type="binding site" evidence="1">
    <location>
        <position position="328"/>
    </location>
    <ligand>
        <name>Ca(2+)</name>
        <dbReference type="ChEBI" id="CHEBI:29108"/>
        <label>1</label>
    </ligand>
</feature>
<feature type="binding site" evidence="1">
    <location>
        <position position="329"/>
    </location>
    <ligand>
        <name>Ca(2+)</name>
        <dbReference type="ChEBI" id="CHEBI:29108"/>
        <label>1</label>
    </ligand>
</feature>
<feature type="binding site" evidence="1">
    <location>
        <position position="329"/>
    </location>
    <ligand>
        <name>Ca(2+)</name>
        <dbReference type="ChEBI" id="CHEBI:29108"/>
        <label>2</label>
    </ligand>
</feature>
<feature type="binding site" evidence="1">
    <location>
        <position position="341"/>
    </location>
    <ligand>
        <name>Ca(2+)</name>
        <dbReference type="ChEBI" id="CHEBI:29108"/>
        <label>2</label>
    </ligand>
</feature>
<feature type="binding site" evidence="1">
    <location>
        <position position="388"/>
    </location>
    <ligand>
        <name>Ca(2+)</name>
        <dbReference type="ChEBI" id="CHEBI:29108"/>
        <label>1</label>
    </ligand>
</feature>
<feature type="binding site" evidence="1">
    <location>
        <position position="388"/>
    </location>
    <ligand>
        <name>Ca(2+)</name>
        <dbReference type="ChEBI" id="CHEBI:29108"/>
        <label>2</label>
    </ligand>
</feature>
<feature type="binding site" evidence="1">
    <location>
        <position position="389"/>
    </location>
    <ligand>
        <name>Ca(2+)</name>
        <dbReference type="ChEBI" id="CHEBI:29108"/>
        <label>2</label>
    </ligand>
</feature>
<feature type="binding site" evidence="1">
    <location>
        <position position="390"/>
    </location>
    <ligand>
        <name>Ca(2+)</name>
        <dbReference type="ChEBI" id="CHEBI:29108"/>
        <label>1</label>
    </ligand>
</feature>
<feature type="binding site" evidence="1">
    <location>
        <position position="390"/>
    </location>
    <ligand>
        <name>Ca(2+)</name>
        <dbReference type="ChEBI" id="CHEBI:29108"/>
        <label>2</label>
    </ligand>
</feature>
<feature type="binding site" evidence="1">
    <location>
        <position position="390"/>
    </location>
    <ligand>
        <name>Ca(2+)</name>
        <dbReference type="ChEBI" id="CHEBI:29108"/>
        <label>3</label>
    </ligand>
</feature>
<feature type="binding site" evidence="1">
    <location>
        <position position="392"/>
    </location>
    <ligand>
        <name>Ca(2+)</name>
        <dbReference type="ChEBI" id="CHEBI:29108"/>
        <label>3</label>
    </ligand>
</feature>
<feature type="binding site" evidence="1">
    <location>
        <position position="394"/>
    </location>
    <ligand>
        <name>Ca(2+)</name>
        <dbReference type="ChEBI" id="CHEBI:29108"/>
        <label>3</label>
    </ligand>
</feature>
<feature type="binding site" evidence="1">
    <location>
        <position position="395"/>
    </location>
    <ligand>
        <name>Ca(2+)</name>
        <dbReference type="ChEBI" id="CHEBI:29108"/>
        <label>1</label>
    </ligand>
</feature>
<proteinExistence type="evidence at transcript level"/>
<keyword id="KW-0106">Calcium</keyword>
<keyword id="KW-1003">Cell membrane</keyword>
<keyword id="KW-0254">Endocytosis</keyword>
<keyword id="KW-0256">Endoplasmic reticulum</keyword>
<keyword id="KW-0445">Lipid transport</keyword>
<keyword id="KW-0446">Lipid-binding</keyword>
<keyword id="KW-0472">Membrane</keyword>
<keyword id="KW-0479">Metal-binding</keyword>
<keyword id="KW-1185">Reference proteome</keyword>
<keyword id="KW-0677">Repeat</keyword>
<keyword id="KW-0812">Transmembrane</keyword>
<keyword id="KW-1133">Transmembrane helix</keyword>
<keyword id="KW-0813">Transport</keyword>
<organism>
    <name type="scientific">Xenopus laevis</name>
    <name type="common">African clawed frog</name>
    <dbReference type="NCBI Taxonomy" id="8355"/>
    <lineage>
        <taxon>Eukaryota</taxon>
        <taxon>Metazoa</taxon>
        <taxon>Chordata</taxon>
        <taxon>Craniata</taxon>
        <taxon>Vertebrata</taxon>
        <taxon>Euteleostomi</taxon>
        <taxon>Amphibia</taxon>
        <taxon>Batrachia</taxon>
        <taxon>Anura</taxon>
        <taxon>Pipoidea</taxon>
        <taxon>Pipidae</taxon>
        <taxon>Xenopodinae</taxon>
        <taxon>Xenopus</taxon>
        <taxon>Xenopus</taxon>
    </lineage>
</organism>
<evidence type="ECO:0000250" key="1"/>
<evidence type="ECO:0000250" key="2">
    <source>
        <dbReference type="UniProtKB" id="A0FGR8"/>
    </source>
</evidence>
<evidence type="ECO:0000250" key="3">
    <source>
        <dbReference type="UniProtKB" id="Q7ZWU7"/>
    </source>
</evidence>
<evidence type="ECO:0000255" key="4"/>
<evidence type="ECO:0000255" key="5">
    <source>
        <dbReference type="PROSITE-ProRule" id="PRU00041"/>
    </source>
</evidence>
<evidence type="ECO:0000255" key="6">
    <source>
        <dbReference type="PROSITE-ProRule" id="PRU01194"/>
    </source>
</evidence>
<evidence type="ECO:0000256" key="7">
    <source>
        <dbReference type="SAM" id="MobiDB-lite"/>
    </source>
</evidence>
<evidence type="ECO:0000305" key="8"/>
<dbReference type="EMBL" id="BC089293">
    <property type="protein sequence ID" value="AAH89293.1"/>
    <property type="molecule type" value="mRNA"/>
</dbReference>
<dbReference type="RefSeq" id="NP_001089260.1">
    <property type="nucleotide sequence ID" value="NM_001095791.1"/>
</dbReference>
<dbReference type="SMR" id="Q5FWL4"/>
<dbReference type="DNASU" id="734307"/>
<dbReference type="GeneID" id="734307"/>
<dbReference type="KEGG" id="xla:734307"/>
<dbReference type="AGR" id="Xenbase:XB-GENE-6251472"/>
<dbReference type="CTD" id="734307"/>
<dbReference type="Xenbase" id="XB-GENE-6251472">
    <property type="gene designation" value="esyt2.S"/>
</dbReference>
<dbReference type="OrthoDB" id="1029639at2759"/>
<dbReference type="Proteomes" id="UP000186698">
    <property type="component" value="Chromosome 6S"/>
</dbReference>
<dbReference type="Bgee" id="734307">
    <property type="expression patterns" value="Expressed in stomach and 19 other cell types or tissues"/>
</dbReference>
<dbReference type="GO" id="GO:0009898">
    <property type="term" value="C:cytoplasmic side of plasma membrane"/>
    <property type="evidence" value="ECO:0000250"/>
    <property type="project" value="UniProtKB"/>
</dbReference>
<dbReference type="GO" id="GO:0005789">
    <property type="term" value="C:endoplasmic reticulum membrane"/>
    <property type="evidence" value="ECO:0000250"/>
    <property type="project" value="UniProtKB"/>
</dbReference>
<dbReference type="GO" id="GO:0140268">
    <property type="term" value="C:endoplasmic reticulum-plasma membrane contact site"/>
    <property type="evidence" value="ECO:0000250"/>
    <property type="project" value="UniProtKB"/>
</dbReference>
<dbReference type="GO" id="GO:0044232">
    <property type="term" value="C:organelle membrane contact site"/>
    <property type="evidence" value="ECO:0000250"/>
    <property type="project" value="UniProtKB"/>
</dbReference>
<dbReference type="GO" id="GO:0005509">
    <property type="term" value="F:calcium ion binding"/>
    <property type="evidence" value="ECO:0000250"/>
    <property type="project" value="UniProtKB"/>
</dbReference>
<dbReference type="GO" id="GO:0005544">
    <property type="term" value="F:calcium-dependent phospholipid binding"/>
    <property type="evidence" value="ECO:0000318"/>
    <property type="project" value="GO_Central"/>
</dbReference>
<dbReference type="GO" id="GO:0031210">
    <property type="term" value="F:phosphatidylcholine binding"/>
    <property type="evidence" value="ECO:0000250"/>
    <property type="project" value="UniProtKB"/>
</dbReference>
<dbReference type="GO" id="GO:0008429">
    <property type="term" value="F:phosphatidylethanolamine binding"/>
    <property type="evidence" value="ECO:0000250"/>
    <property type="project" value="UniProtKB"/>
</dbReference>
<dbReference type="GO" id="GO:0035091">
    <property type="term" value="F:phosphatidylinositol binding"/>
    <property type="evidence" value="ECO:0000250"/>
    <property type="project" value="UniProtKB"/>
</dbReference>
<dbReference type="GO" id="GO:0006897">
    <property type="term" value="P:endocytosis"/>
    <property type="evidence" value="ECO:0007669"/>
    <property type="project" value="UniProtKB-KW"/>
</dbReference>
<dbReference type="GO" id="GO:0061817">
    <property type="term" value="P:endoplasmic reticulum-plasma membrane tethering"/>
    <property type="evidence" value="ECO:0007669"/>
    <property type="project" value="InterPro"/>
</dbReference>
<dbReference type="GO" id="GO:0006869">
    <property type="term" value="P:lipid transport"/>
    <property type="evidence" value="ECO:0007669"/>
    <property type="project" value="UniProtKB-KW"/>
</dbReference>
<dbReference type="CDD" id="cd08391">
    <property type="entry name" value="C2A_C2C_Synaptotagmin_like"/>
    <property type="match status" value="1"/>
</dbReference>
<dbReference type="CDD" id="cd04050">
    <property type="entry name" value="C2B_Synaptotagmin-like"/>
    <property type="match status" value="1"/>
</dbReference>
<dbReference type="CDD" id="cd04030">
    <property type="entry name" value="C2C_KIAA1228"/>
    <property type="match status" value="1"/>
</dbReference>
<dbReference type="CDD" id="cd21680">
    <property type="entry name" value="SMP_ESyt2"/>
    <property type="match status" value="1"/>
</dbReference>
<dbReference type="FunFam" id="2.60.40.150:FF:000025">
    <property type="entry name" value="Extended synaptotagmin 2"/>
    <property type="match status" value="1"/>
</dbReference>
<dbReference type="FunFam" id="2.60.40.150:FF:000078">
    <property type="entry name" value="Extended synaptotagmin 2"/>
    <property type="match status" value="1"/>
</dbReference>
<dbReference type="FunFam" id="2.60.40.150:FF:000091">
    <property type="entry name" value="Extended synaptotagmin 2"/>
    <property type="match status" value="1"/>
</dbReference>
<dbReference type="Gene3D" id="2.60.40.150">
    <property type="entry name" value="C2 domain"/>
    <property type="match status" value="3"/>
</dbReference>
<dbReference type="InterPro" id="IPR000008">
    <property type="entry name" value="C2_dom"/>
</dbReference>
<dbReference type="InterPro" id="IPR035892">
    <property type="entry name" value="C2_domain_sf"/>
</dbReference>
<dbReference type="InterPro" id="IPR037752">
    <property type="entry name" value="C2C_KIAA1228"/>
</dbReference>
<dbReference type="InterPro" id="IPR037733">
    <property type="entry name" value="Ext_Synaptotagmin_C2A"/>
</dbReference>
<dbReference type="InterPro" id="IPR037749">
    <property type="entry name" value="Ext_Synaptotagmin_C2B"/>
</dbReference>
<dbReference type="InterPro" id="IPR051634">
    <property type="entry name" value="Extended_Synaptotagmin"/>
</dbReference>
<dbReference type="InterPro" id="IPR031468">
    <property type="entry name" value="SMP_LBD"/>
</dbReference>
<dbReference type="InterPro" id="IPR039010">
    <property type="entry name" value="Synaptotagmin_SMP"/>
</dbReference>
<dbReference type="PANTHER" id="PTHR45761:SF2">
    <property type="entry name" value="EXTENDED SYNAPTOTAGMIN-2"/>
    <property type="match status" value="1"/>
</dbReference>
<dbReference type="PANTHER" id="PTHR45761">
    <property type="entry name" value="EXTENDED SYNAPTOTAGMIN-LIKE PROTEIN 2, ISOFORM C"/>
    <property type="match status" value="1"/>
</dbReference>
<dbReference type="Pfam" id="PF00168">
    <property type="entry name" value="C2"/>
    <property type="match status" value="3"/>
</dbReference>
<dbReference type="Pfam" id="PF17047">
    <property type="entry name" value="SMP_LBD"/>
    <property type="match status" value="1"/>
</dbReference>
<dbReference type="SMART" id="SM00239">
    <property type="entry name" value="C2"/>
    <property type="match status" value="3"/>
</dbReference>
<dbReference type="SUPFAM" id="SSF49562">
    <property type="entry name" value="C2 domain (Calcium/lipid-binding domain, CaLB)"/>
    <property type="match status" value="3"/>
</dbReference>
<dbReference type="PROSITE" id="PS50004">
    <property type="entry name" value="C2"/>
    <property type="match status" value="3"/>
</dbReference>
<dbReference type="PROSITE" id="PS51847">
    <property type="entry name" value="SMP"/>
    <property type="match status" value="1"/>
</dbReference>